<evidence type="ECO:0000256" key="1">
    <source>
        <dbReference type="SAM" id="MobiDB-lite"/>
    </source>
</evidence>
<evidence type="ECO:0000305" key="2"/>
<evidence type="ECO:0000312" key="3">
    <source>
        <dbReference type="HGNC" id="HGNC:42974"/>
    </source>
</evidence>
<keyword id="KW-1185">Reference proteome</keyword>
<accession>E5RJ46</accession>
<name>CH087_HUMAN</name>
<protein>
    <recommendedName>
        <fullName evidence="2">Putative uncharacterized protein LINC02906</fullName>
    </recommendedName>
    <alternativeName>
        <fullName evidence="3">Long intergenic non-protein coding RNA 2906</fullName>
    </alternativeName>
</protein>
<reference key="1">
    <citation type="journal article" date="2006" name="Nature">
        <title>DNA sequence and analysis of human chromosome 8.</title>
        <authorList>
            <person name="Nusbaum C."/>
            <person name="Mikkelsen T.S."/>
            <person name="Zody M.C."/>
            <person name="Asakawa S."/>
            <person name="Taudien S."/>
            <person name="Garber M."/>
            <person name="Kodira C.D."/>
            <person name="Schueler M.G."/>
            <person name="Shimizu A."/>
            <person name="Whittaker C.A."/>
            <person name="Chang J.L."/>
            <person name="Cuomo C.A."/>
            <person name="Dewar K."/>
            <person name="FitzGerald M.G."/>
            <person name="Yang X."/>
            <person name="Allen N.R."/>
            <person name="Anderson S."/>
            <person name="Asakawa T."/>
            <person name="Blechschmidt K."/>
            <person name="Bloom T."/>
            <person name="Borowsky M.L."/>
            <person name="Butler J."/>
            <person name="Cook A."/>
            <person name="Corum B."/>
            <person name="DeArellano K."/>
            <person name="DeCaprio D."/>
            <person name="Dooley K.T."/>
            <person name="Dorris L. III"/>
            <person name="Engels R."/>
            <person name="Gloeckner G."/>
            <person name="Hafez N."/>
            <person name="Hagopian D.S."/>
            <person name="Hall J.L."/>
            <person name="Ishikawa S.K."/>
            <person name="Jaffe D.B."/>
            <person name="Kamat A."/>
            <person name="Kudoh J."/>
            <person name="Lehmann R."/>
            <person name="Lokitsang T."/>
            <person name="Macdonald P."/>
            <person name="Major J.E."/>
            <person name="Matthews C.D."/>
            <person name="Mauceli E."/>
            <person name="Menzel U."/>
            <person name="Mihalev A.H."/>
            <person name="Minoshima S."/>
            <person name="Murayama Y."/>
            <person name="Naylor J.W."/>
            <person name="Nicol R."/>
            <person name="Nguyen C."/>
            <person name="O'Leary S.B."/>
            <person name="O'Neill K."/>
            <person name="Parker S.C.J."/>
            <person name="Polley A."/>
            <person name="Raymond C.K."/>
            <person name="Reichwald K."/>
            <person name="Rodriguez J."/>
            <person name="Sasaki T."/>
            <person name="Schilhabel M."/>
            <person name="Siddiqui R."/>
            <person name="Smith C.L."/>
            <person name="Sneddon T.P."/>
            <person name="Talamas J.A."/>
            <person name="Tenzin P."/>
            <person name="Topham K."/>
            <person name="Venkataraman V."/>
            <person name="Wen G."/>
            <person name="Yamazaki S."/>
            <person name="Young S.K."/>
            <person name="Zeng Q."/>
            <person name="Zimmer A.R."/>
            <person name="Rosenthal A."/>
            <person name="Birren B.W."/>
            <person name="Platzer M."/>
            <person name="Shimizu N."/>
            <person name="Lander E.S."/>
        </authorList>
    </citation>
    <scope>NUCLEOTIDE SEQUENCE [LARGE SCALE GENOMIC DNA]</scope>
</reference>
<reference key="2">
    <citation type="journal article" date="2004" name="Genome Res.">
        <title>The status, quality, and expansion of the NIH full-length cDNA project: the Mammalian Gene Collection (MGC).</title>
        <authorList>
            <consortium name="The MGC Project Team"/>
        </authorList>
    </citation>
    <scope>NUCLEOTIDE SEQUENCE [LARGE SCALE MRNA]</scope>
    <source>
        <tissue>Lung tumor</tissue>
    </source>
</reference>
<comment type="caution">
    <text evidence="2">Product of a dubious gene prediction.</text>
</comment>
<feature type="chain" id="PRO_0000416815" description="Putative uncharacterized protein LINC02906">
    <location>
        <begin position="1"/>
        <end position="101"/>
    </location>
</feature>
<feature type="region of interest" description="Disordered" evidence="1">
    <location>
        <begin position="39"/>
        <end position="74"/>
    </location>
</feature>
<feature type="compositionally biased region" description="Polar residues" evidence="1">
    <location>
        <begin position="50"/>
        <end position="60"/>
    </location>
</feature>
<dbReference type="EMBL" id="AC016885">
    <property type="status" value="NOT_ANNOTATED_CDS"/>
    <property type="molecule type" value="Genomic_DNA"/>
</dbReference>
<dbReference type="EMBL" id="AC022825">
    <property type="status" value="NOT_ANNOTATED_CDS"/>
    <property type="molecule type" value="Genomic_DNA"/>
</dbReference>
<dbReference type="EMBL" id="BC089453">
    <property type="status" value="NOT_ANNOTATED_CDS"/>
    <property type="molecule type" value="mRNA"/>
</dbReference>
<dbReference type="RefSeq" id="NP_001229597.1">
    <property type="nucleotide sequence ID" value="NM_001242668.1"/>
</dbReference>
<dbReference type="BioMuta" id="HGNC:42974"/>
<dbReference type="PaxDb" id="9606-ENSP00000484751"/>
<dbReference type="AGR" id="HGNC:42974"/>
<dbReference type="GeneCards" id="LINC02906"/>
<dbReference type="HGNC" id="HGNC:42974">
    <property type="gene designation" value="LINC02906"/>
</dbReference>
<dbReference type="neXtProt" id="NX_E5RJ46"/>
<dbReference type="eggNOG" id="ENOG502TCE0">
    <property type="taxonomic scope" value="Eukaryota"/>
</dbReference>
<dbReference type="InParanoid" id="E5RJ46"/>
<dbReference type="PAN-GO" id="E5RJ46">
    <property type="GO annotations" value="0 GO annotations based on evolutionary models"/>
</dbReference>
<dbReference type="PathwayCommons" id="E5RJ46"/>
<dbReference type="BioGRID-ORCS" id="389676">
    <property type="hits" value="13 hits in 738 CRISPR screens"/>
</dbReference>
<dbReference type="GenomeRNAi" id="389676"/>
<dbReference type="Pharos" id="E5RJ46">
    <property type="development level" value="Tdark"/>
</dbReference>
<dbReference type="Proteomes" id="UP000005640">
    <property type="component" value="Unplaced"/>
</dbReference>
<dbReference type="RNAct" id="E5RJ46">
    <property type="molecule type" value="protein"/>
</dbReference>
<sequence length="101" mass="11413">MRTPKRTRSPKTKVSLRGETLTLQLTTVSLDTRHMVKRCDERHGRPLPHSQESQHGSATSKKAVRGTADTAPLERISAARGWALPMEATVSVFRAHQWQWN</sequence>
<gene>
    <name evidence="3" type="primary">LINC02906</name>
    <name evidence="3" type="synonym">C8orf87</name>
</gene>
<proteinExistence type="uncertain"/>
<organism>
    <name type="scientific">Homo sapiens</name>
    <name type="common">Human</name>
    <dbReference type="NCBI Taxonomy" id="9606"/>
    <lineage>
        <taxon>Eukaryota</taxon>
        <taxon>Metazoa</taxon>
        <taxon>Chordata</taxon>
        <taxon>Craniata</taxon>
        <taxon>Vertebrata</taxon>
        <taxon>Euteleostomi</taxon>
        <taxon>Mammalia</taxon>
        <taxon>Eutheria</taxon>
        <taxon>Euarchontoglires</taxon>
        <taxon>Primates</taxon>
        <taxon>Haplorrhini</taxon>
        <taxon>Catarrhini</taxon>
        <taxon>Hominidae</taxon>
        <taxon>Homo</taxon>
    </lineage>
</organism>